<sequence>MSLNFLEFEKPIAELEAKIEALRDISRRGGDNALDLDKEIKQLEDKCLDLKKKTFSDLGAWEVAQLARHPERPYVLDYIELMFTEFDELAGDRAFADDKALVGGMARLDGRPVMIIGHQKGRGTKEKVRRNFGMPKPEGYRKAKRLMQMAERFKMPIITFIDTAGAYPGVGAEERGQSEAIATNLKIMSELSVPVICNVVGEGGSGGALAIGVGDYVNMLQYSTYSVISPEGCASILWRDSDKAPQAAEAMGLVAPRLKELELIDTIIDEPLGGAHRNHKATAENIKQRLIEQLNELEGFDEEALLERRYQRLMNYGYC</sequence>
<gene>
    <name evidence="1" type="primary">accA</name>
    <name type="ordered locus">VSAL_I2411</name>
</gene>
<protein>
    <recommendedName>
        <fullName evidence="1">Acetyl-coenzyme A carboxylase carboxyl transferase subunit alpha</fullName>
        <shortName evidence="1">ACCase subunit alpha</shortName>
        <shortName evidence="1">Acetyl-CoA carboxylase carboxyltransferase subunit alpha</shortName>
        <ecNumber evidence="1">2.1.3.15</ecNumber>
    </recommendedName>
</protein>
<name>ACCA_ALISL</name>
<dbReference type="EC" id="2.1.3.15" evidence="1"/>
<dbReference type="EMBL" id="FM178379">
    <property type="protein sequence ID" value="CAQ80095.1"/>
    <property type="molecule type" value="Genomic_DNA"/>
</dbReference>
<dbReference type="RefSeq" id="WP_012550899.1">
    <property type="nucleotide sequence ID" value="NC_011312.1"/>
</dbReference>
<dbReference type="SMR" id="B6EJW4"/>
<dbReference type="KEGG" id="vsa:VSAL_I2411"/>
<dbReference type="eggNOG" id="COG0825">
    <property type="taxonomic scope" value="Bacteria"/>
</dbReference>
<dbReference type="HOGENOM" id="CLU_015486_0_2_6"/>
<dbReference type="UniPathway" id="UPA00655">
    <property type="reaction ID" value="UER00711"/>
</dbReference>
<dbReference type="Proteomes" id="UP000001730">
    <property type="component" value="Chromosome 1"/>
</dbReference>
<dbReference type="GO" id="GO:0009317">
    <property type="term" value="C:acetyl-CoA carboxylase complex"/>
    <property type="evidence" value="ECO:0007669"/>
    <property type="project" value="InterPro"/>
</dbReference>
<dbReference type="GO" id="GO:0003989">
    <property type="term" value="F:acetyl-CoA carboxylase activity"/>
    <property type="evidence" value="ECO:0007669"/>
    <property type="project" value="InterPro"/>
</dbReference>
<dbReference type="GO" id="GO:0005524">
    <property type="term" value="F:ATP binding"/>
    <property type="evidence" value="ECO:0007669"/>
    <property type="project" value="UniProtKB-KW"/>
</dbReference>
<dbReference type="GO" id="GO:0016743">
    <property type="term" value="F:carboxyl- or carbamoyltransferase activity"/>
    <property type="evidence" value="ECO:0007669"/>
    <property type="project" value="UniProtKB-UniRule"/>
</dbReference>
<dbReference type="GO" id="GO:0006633">
    <property type="term" value="P:fatty acid biosynthetic process"/>
    <property type="evidence" value="ECO:0007669"/>
    <property type="project" value="UniProtKB-KW"/>
</dbReference>
<dbReference type="GO" id="GO:2001295">
    <property type="term" value="P:malonyl-CoA biosynthetic process"/>
    <property type="evidence" value="ECO:0007669"/>
    <property type="project" value="UniProtKB-UniRule"/>
</dbReference>
<dbReference type="FunFam" id="3.90.226.10:FF:000008">
    <property type="entry name" value="Acetyl-coenzyme A carboxylase carboxyl transferase subunit alpha"/>
    <property type="match status" value="1"/>
</dbReference>
<dbReference type="Gene3D" id="3.90.226.10">
    <property type="entry name" value="2-enoyl-CoA Hydratase, Chain A, domain 1"/>
    <property type="match status" value="1"/>
</dbReference>
<dbReference type="HAMAP" id="MF_00823">
    <property type="entry name" value="AcetylCoA_CT_alpha"/>
    <property type="match status" value="1"/>
</dbReference>
<dbReference type="InterPro" id="IPR001095">
    <property type="entry name" value="Acetyl_CoA_COase_a_su"/>
</dbReference>
<dbReference type="InterPro" id="IPR029045">
    <property type="entry name" value="ClpP/crotonase-like_dom_sf"/>
</dbReference>
<dbReference type="InterPro" id="IPR011763">
    <property type="entry name" value="COA_CT_C"/>
</dbReference>
<dbReference type="NCBIfam" id="TIGR00513">
    <property type="entry name" value="accA"/>
    <property type="match status" value="1"/>
</dbReference>
<dbReference type="NCBIfam" id="NF041504">
    <property type="entry name" value="AccA_sub"/>
    <property type="match status" value="1"/>
</dbReference>
<dbReference type="NCBIfam" id="NF004344">
    <property type="entry name" value="PRK05724.1"/>
    <property type="match status" value="1"/>
</dbReference>
<dbReference type="PANTHER" id="PTHR42853">
    <property type="entry name" value="ACETYL-COENZYME A CARBOXYLASE CARBOXYL TRANSFERASE SUBUNIT ALPHA"/>
    <property type="match status" value="1"/>
</dbReference>
<dbReference type="PANTHER" id="PTHR42853:SF3">
    <property type="entry name" value="ACETYL-COENZYME A CARBOXYLASE CARBOXYL TRANSFERASE SUBUNIT ALPHA, CHLOROPLASTIC"/>
    <property type="match status" value="1"/>
</dbReference>
<dbReference type="Pfam" id="PF03255">
    <property type="entry name" value="ACCA"/>
    <property type="match status" value="1"/>
</dbReference>
<dbReference type="PRINTS" id="PR01069">
    <property type="entry name" value="ACCCTRFRASEA"/>
</dbReference>
<dbReference type="SUPFAM" id="SSF52096">
    <property type="entry name" value="ClpP/crotonase"/>
    <property type="match status" value="1"/>
</dbReference>
<dbReference type="PROSITE" id="PS50989">
    <property type="entry name" value="COA_CT_CTER"/>
    <property type="match status" value="1"/>
</dbReference>
<accession>B6EJW4</accession>
<reference key="1">
    <citation type="journal article" date="2008" name="BMC Genomics">
        <title>The genome sequence of the fish pathogen Aliivibrio salmonicida strain LFI1238 shows extensive evidence of gene decay.</title>
        <authorList>
            <person name="Hjerde E."/>
            <person name="Lorentzen M.S."/>
            <person name="Holden M.T."/>
            <person name="Seeger K."/>
            <person name="Paulsen S."/>
            <person name="Bason N."/>
            <person name="Churcher C."/>
            <person name="Harris D."/>
            <person name="Norbertczak H."/>
            <person name="Quail M.A."/>
            <person name="Sanders S."/>
            <person name="Thurston S."/>
            <person name="Parkhill J."/>
            <person name="Willassen N.P."/>
            <person name="Thomson N.R."/>
        </authorList>
    </citation>
    <scope>NUCLEOTIDE SEQUENCE [LARGE SCALE GENOMIC DNA]</scope>
    <source>
        <strain>LFI1238</strain>
    </source>
</reference>
<proteinExistence type="inferred from homology"/>
<feature type="chain" id="PRO_1000134454" description="Acetyl-coenzyme A carboxylase carboxyl transferase subunit alpha">
    <location>
        <begin position="1"/>
        <end position="319"/>
    </location>
</feature>
<feature type="domain" description="CoA carboxyltransferase C-terminal" evidence="2">
    <location>
        <begin position="35"/>
        <end position="296"/>
    </location>
</feature>
<keyword id="KW-0067">ATP-binding</keyword>
<keyword id="KW-0963">Cytoplasm</keyword>
<keyword id="KW-0275">Fatty acid biosynthesis</keyword>
<keyword id="KW-0276">Fatty acid metabolism</keyword>
<keyword id="KW-0444">Lipid biosynthesis</keyword>
<keyword id="KW-0443">Lipid metabolism</keyword>
<keyword id="KW-0547">Nucleotide-binding</keyword>
<keyword id="KW-0808">Transferase</keyword>
<organism>
    <name type="scientific">Aliivibrio salmonicida (strain LFI1238)</name>
    <name type="common">Vibrio salmonicida (strain LFI1238)</name>
    <dbReference type="NCBI Taxonomy" id="316275"/>
    <lineage>
        <taxon>Bacteria</taxon>
        <taxon>Pseudomonadati</taxon>
        <taxon>Pseudomonadota</taxon>
        <taxon>Gammaproteobacteria</taxon>
        <taxon>Vibrionales</taxon>
        <taxon>Vibrionaceae</taxon>
        <taxon>Aliivibrio</taxon>
    </lineage>
</organism>
<comment type="function">
    <text evidence="1">Component of the acetyl coenzyme A carboxylase (ACC) complex. First, biotin carboxylase catalyzes the carboxylation of biotin on its carrier protein (BCCP) and then the CO(2) group is transferred by the carboxyltransferase to acetyl-CoA to form malonyl-CoA.</text>
</comment>
<comment type="catalytic activity">
    <reaction evidence="1">
        <text>N(6)-carboxybiotinyl-L-lysyl-[protein] + acetyl-CoA = N(6)-biotinyl-L-lysyl-[protein] + malonyl-CoA</text>
        <dbReference type="Rhea" id="RHEA:54728"/>
        <dbReference type="Rhea" id="RHEA-COMP:10505"/>
        <dbReference type="Rhea" id="RHEA-COMP:10506"/>
        <dbReference type="ChEBI" id="CHEBI:57288"/>
        <dbReference type="ChEBI" id="CHEBI:57384"/>
        <dbReference type="ChEBI" id="CHEBI:83144"/>
        <dbReference type="ChEBI" id="CHEBI:83145"/>
        <dbReference type="EC" id="2.1.3.15"/>
    </reaction>
</comment>
<comment type="pathway">
    <text evidence="1">Lipid metabolism; malonyl-CoA biosynthesis; malonyl-CoA from acetyl-CoA: step 1/1.</text>
</comment>
<comment type="subunit">
    <text evidence="1">Acetyl-CoA carboxylase is a heterohexamer composed of biotin carboxyl carrier protein (AccB), biotin carboxylase (AccC) and two subunits each of ACCase subunit alpha (AccA) and ACCase subunit beta (AccD).</text>
</comment>
<comment type="subcellular location">
    <subcellularLocation>
        <location evidence="1">Cytoplasm</location>
    </subcellularLocation>
</comment>
<comment type="similarity">
    <text evidence="1">Belongs to the AccA family.</text>
</comment>
<evidence type="ECO:0000255" key="1">
    <source>
        <dbReference type="HAMAP-Rule" id="MF_00823"/>
    </source>
</evidence>
<evidence type="ECO:0000255" key="2">
    <source>
        <dbReference type="PROSITE-ProRule" id="PRU01137"/>
    </source>
</evidence>